<comment type="function">
    <text evidence="1">Mannose-binding lectin which recognizes specific carbohydrate structures and agglutinates a variety of animal cells by binding to cell-surface glycoproteins and glycolipids. May be a calcium-dependent lectin (By similarity).</text>
</comment>
<comment type="subcellular location">
    <subcellularLocation>
        <location evidence="1">Secreted</location>
    </subcellularLocation>
</comment>
<comment type="tissue specificity">
    <text>Expressed by the venom gland.</text>
</comment>
<comment type="similarity">
    <text evidence="4">Belongs to the true venom lectin family.</text>
</comment>
<evidence type="ECO:0000250" key="1"/>
<evidence type="ECO:0000255" key="2"/>
<evidence type="ECO:0000255" key="3">
    <source>
        <dbReference type="PROSITE-ProRule" id="PRU00040"/>
    </source>
</evidence>
<evidence type="ECO:0000305" key="4"/>
<feature type="signal peptide" evidence="2">
    <location>
        <begin position="1"/>
        <end position="23"/>
    </location>
</feature>
<feature type="chain" id="PRO_0000355286" description="C-type lectin lectoxin-Phi2">
    <location>
        <begin position="24"/>
        <end position="156"/>
    </location>
</feature>
<feature type="domain" description="C-type lectin" evidence="3">
    <location>
        <begin position="34"/>
        <end position="155"/>
    </location>
</feature>
<feature type="short sequence motif" description="Mannose-binding">
    <location>
        <begin position="119"/>
        <end position="121"/>
    </location>
</feature>
<feature type="binding site" evidence="1">
    <location>
        <position position="127"/>
    </location>
    <ligand>
        <name>Ca(2+)</name>
        <dbReference type="ChEBI" id="CHEBI:29108"/>
    </ligand>
</feature>
<feature type="binding site" evidence="1">
    <location>
        <position position="142"/>
    </location>
    <ligand>
        <name>Ca(2+)</name>
        <dbReference type="ChEBI" id="CHEBI:29108"/>
    </ligand>
</feature>
<feature type="binding site" evidence="1">
    <location>
        <position position="143"/>
    </location>
    <ligand>
        <name>Ca(2+)</name>
        <dbReference type="ChEBI" id="CHEBI:29108"/>
    </ligand>
</feature>
<feature type="glycosylation site" description="N-linked (GlcNAc...) asparagine" evidence="2">
    <location>
        <position position="35"/>
    </location>
</feature>
<feature type="glycosylation site" description="N-linked (GlcNAc...) asparagine" evidence="2">
    <location>
        <position position="109"/>
    </location>
</feature>
<feature type="disulfide bond" evidence="3">
    <location>
        <begin position="27"/>
        <end position="38"/>
    </location>
</feature>
<feature type="disulfide bond" evidence="3">
    <location>
        <begin position="55"/>
        <end position="154"/>
    </location>
</feature>
<feature type="disulfide bond" evidence="3">
    <location>
        <begin position="129"/>
        <end position="146"/>
    </location>
</feature>
<protein>
    <recommendedName>
        <fullName>C-type lectin lectoxin-Phi2</fullName>
        <shortName>CTL</shortName>
    </recommendedName>
</protein>
<proteinExistence type="evidence at transcript level"/>
<reference key="1">
    <citation type="journal article" date="2008" name="Mol. Cell. Proteomics">
        <title>Evolution of an arsenal: structural and functional diversification of the venom system in the advanced snakes (Caenophidia).</title>
        <authorList>
            <person name="Fry B.G."/>
            <person name="Scheib H."/>
            <person name="van der Weerd L."/>
            <person name="Young B."/>
            <person name="McNaughtan J."/>
            <person name="Ramjan S.F.R."/>
            <person name="Vidal N."/>
            <person name="Poelmann R.E."/>
            <person name="Norman J.A."/>
        </authorList>
    </citation>
    <scope>NUCLEOTIDE SEQUENCE [MRNA]</scope>
    <source>
        <tissue>Venom gland</tissue>
    </source>
</reference>
<sequence>MGRFIFVSLGLLVLAFSLSGIGADQHCPSGWFSHNVSCYKLINDWKTWDEAQRFCMDEQENGQLASINDVGESVKLSDEFSKTWSIIDVWIGLRLSKRKSIWEWIDGSNVTQTRWEEGEPNNFLKKEFCVVLTSRSRYLKWNDKDCNRRHRFLCKF</sequence>
<keyword id="KW-0106">Calcium</keyword>
<keyword id="KW-1015">Disulfide bond</keyword>
<keyword id="KW-0325">Glycoprotein</keyword>
<keyword id="KW-0430">Lectin</keyword>
<keyword id="KW-0479">Metal-binding</keyword>
<keyword id="KW-0964">Secreted</keyword>
<keyword id="KW-0732">Signal</keyword>
<organism>
    <name type="scientific">Philodryas olfersii</name>
    <name type="common">Green snake</name>
    <dbReference type="NCBI Taxonomy" id="120305"/>
    <lineage>
        <taxon>Eukaryota</taxon>
        <taxon>Metazoa</taxon>
        <taxon>Chordata</taxon>
        <taxon>Craniata</taxon>
        <taxon>Vertebrata</taxon>
        <taxon>Euteleostomi</taxon>
        <taxon>Lepidosauria</taxon>
        <taxon>Squamata</taxon>
        <taxon>Bifurcata</taxon>
        <taxon>Unidentata</taxon>
        <taxon>Episquamata</taxon>
        <taxon>Toxicofera</taxon>
        <taxon>Serpentes</taxon>
        <taxon>Colubroidea</taxon>
        <taxon>Dipsadidae</taxon>
        <taxon>Philodryas</taxon>
    </lineage>
</organism>
<name>LECM2_PHIOL</name>
<dbReference type="EMBL" id="EU029701">
    <property type="protein sequence ID" value="ABU68501.1"/>
    <property type="molecule type" value="mRNA"/>
</dbReference>
<dbReference type="SMR" id="A7X409"/>
<dbReference type="GO" id="GO:0005576">
    <property type="term" value="C:extracellular region"/>
    <property type="evidence" value="ECO:0007669"/>
    <property type="project" value="UniProtKB-SubCell"/>
</dbReference>
<dbReference type="GO" id="GO:0030246">
    <property type="term" value="F:carbohydrate binding"/>
    <property type="evidence" value="ECO:0007669"/>
    <property type="project" value="UniProtKB-KW"/>
</dbReference>
<dbReference type="GO" id="GO:0046872">
    <property type="term" value="F:metal ion binding"/>
    <property type="evidence" value="ECO:0007669"/>
    <property type="project" value="UniProtKB-KW"/>
</dbReference>
<dbReference type="Gene3D" id="3.10.100.10">
    <property type="entry name" value="Mannose-Binding Protein A, subunit A"/>
    <property type="match status" value="1"/>
</dbReference>
<dbReference type="InterPro" id="IPR001304">
    <property type="entry name" value="C-type_lectin-like"/>
</dbReference>
<dbReference type="InterPro" id="IPR016186">
    <property type="entry name" value="C-type_lectin-like/link_sf"/>
</dbReference>
<dbReference type="InterPro" id="IPR050111">
    <property type="entry name" value="C-type_lectin/snaclec_domain"/>
</dbReference>
<dbReference type="InterPro" id="IPR018378">
    <property type="entry name" value="C-type_lectin_CS"/>
</dbReference>
<dbReference type="InterPro" id="IPR016187">
    <property type="entry name" value="CTDL_fold"/>
</dbReference>
<dbReference type="PANTHER" id="PTHR22803">
    <property type="entry name" value="MANNOSE, PHOSPHOLIPASE, LECTIN RECEPTOR RELATED"/>
    <property type="match status" value="1"/>
</dbReference>
<dbReference type="Pfam" id="PF00059">
    <property type="entry name" value="Lectin_C"/>
    <property type="match status" value="1"/>
</dbReference>
<dbReference type="PRINTS" id="PR01504">
    <property type="entry name" value="PNCREATITSAP"/>
</dbReference>
<dbReference type="SMART" id="SM00034">
    <property type="entry name" value="CLECT"/>
    <property type="match status" value="1"/>
</dbReference>
<dbReference type="SUPFAM" id="SSF56436">
    <property type="entry name" value="C-type lectin-like"/>
    <property type="match status" value="1"/>
</dbReference>
<dbReference type="PROSITE" id="PS00615">
    <property type="entry name" value="C_TYPE_LECTIN_1"/>
    <property type="match status" value="1"/>
</dbReference>
<dbReference type="PROSITE" id="PS50041">
    <property type="entry name" value="C_TYPE_LECTIN_2"/>
    <property type="match status" value="1"/>
</dbReference>
<accession>A7X409</accession>